<comment type="function">
    <text evidence="1">Involved in the maturation of [NiFe] hydrogenases. Required for nickel insertion into the metal center of the hydrogenase.</text>
</comment>
<comment type="similarity">
    <text evidence="1">Belongs to the HypA/HybF family.</text>
</comment>
<feature type="chain" id="PRO_0000129047" description="Hydrogenase maturation factor HypA">
    <location>
        <begin position="1"/>
        <end position="113"/>
    </location>
</feature>
<feature type="binding site" evidence="1">
    <location>
        <position position="2"/>
    </location>
    <ligand>
        <name>Ni(2+)</name>
        <dbReference type="ChEBI" id="CHEBI:49786"/>
    </ligand>
</feature>
<feature type="binding site" evidence="1">
    <location>
        <position position="73"/>
    </location>
    <ligand>
        <name>Zn(2+)</name>
        <dbReference type="ChEBI" id="CHEBI:29105"/>
    </ligand>
</feature>
<feature type="binding site" evidence="1">
    <location>
        <position position="76"/>
    </location>
    <ligand>
        <name>Zn(2+)</name>
        <dbReference type="ChEBI" id="CHEBI:29105"/>
    </ligand>
</feature>
<feature type="binding site" evidence="1">
    <location>
        <position position="89"/>
    </location>
    <ligand>
        <name>Zn(2+)</name>
        <dbReference type="ChEBI" id="CHEBI:29105"/>
    </ligand>
</feature>
<feature type="binding site" evidence="1">
    <location>
        <position position="92"/>
    </location>
    <ligand>
        <name>Zn(2+)</name>
        <dbReference type="ChEBI" id="CHEBI:29105"/>
    </ligand>
</feature>
<organism>
    <name type="scientific">Rhodopseudomonas palustris (strain ATCC BAA-98 / CGA009)</name>
    <dbReference type="NCBI Taxonomy" id="258594"/>
    <lineage>
        <taxon>Bacteria</taxon>
        <taxon>Pseudomonadati</taxon>
        <taxon>Pseudomonadota</taxon>
        <taxon>Alphaproteobacteria</taxon>
        <taxon>Hyphomicrobiales</taxon>
        <taxon>Nitrobacteraceae</taxon>
        <taxon>Rhodopseudomonas</taxon>
    </lineage>
</organism>
<accession>Q6NB57</accession>
<gene>
    <name evidence="1" type="primary">hypA</name>
    <name type="ordered locus">RPA0973</name>
</gene>
<dbReference type="EMBL" id="BX572596">
    <property type="protein sequence ID" value="CAE26416.1"/>
    <property type="molecule type" value="Genomic_DNA"/>
</dbReference>
<dbReference type="RefSeq" id="WP_011156506.1">
    <property type="nucleotide sequence ID" value="NZ_CP116810.1"/>
</dbReference>
<dbReference type="SMR" id="Q6NB57"/>
<dbReference type="STRING" id="258594.RPA0973"/>
<dbReference type="GeneID" id="66891992"/>
<dbReference type="eggNOG" id="COG0375">
    <property type="taxonomic scope" value="Bacteria"/>
</dbReference>
<dbReference type="HOGENOM" id="CLU_126929_0_0_5"/>
<dbReference type="PhylomeDB" id="Q6NB57"/>
<dbReference type="GO" id="GO:0016151">
    <property type="term" value="F:nickel cation binding"/>
    <property type="evidence" value="ECO:0007669"/>
    <property type="project" value="UniProtKB-UniRule"/>
</dbReference>
<dbReference type="GO" id="GO:0008270">
    <property type="term" value="F:zinc ion binding"/>
    <property type="evidence" value="ECO:0007669"/>
    <property type="project" value="UniProtKB-UniRule"/>
</dbReference>
<dbReference type="GO" id="GO:0051604">
    <property type="term" value="P:protein maturation"/>
    <property type="evidence" value="ECO:0007669"/>
    <property type="project" value="InterPro"/>
</dbReference>
<dbReference type="GO" id="GO:0036211">
    <property type="term" value="P:protein modification process"/>
    <property type="evidence" value="ECO:0007669"/>
    <property type="project" value="UniProtKB-UniRule"/>
</dbReference>
<dbReference type="FunFam" id="3.30.2320.80:FF:000001">
    <property type="entry name" value="Hydrogenase maturation factor HypA"/>
    <property type="match status" value="1"/>
</dbReference>
<dbReference type="Gene3D" id="3.30.2320.80">
    <property type="match status" value="1"/>
</dbReference>
<dbReference type="HAMAP" id="MF_00213">
    <property type="entry name" value="HypA_HybF"/>
    <property type="match status" value="1"/>
</dbReference>
<dbReference type="InterPro" id="IPR000688">
    <property type="entry name" value="HypA/HybF"/>
</dbReference>
<dbReference type="NCBIfam" id="TIGR00100">
    <property type="entry name" value="hypA"/>
    <property type="match status" value="1"/>
</dbReference>
<dbReference type="NCBIfam" id="NF009046">
    <property type="entry name" value="PRK12380.1"/>
    <property type="match status" value="1"/>
</dbReference>
<dbReference type="PANTHER" id="PTHR34535">
    <property type="entry name" value="HYDROGENASE MATURATION FACTOR HYPA"/>
    <property type="match status" value="1"/>
</dbReference>
<dbReference type="PANTHER" id="PTHR34535:SF3">
    <property type="entry name" value="HYDROGENASE MATURATION FACTOR HYPA"/>
    <property type="match status" value="1"/>
</dbReference>
<dbReference type="Pfam" id="PF01155">
    <property type="entry name" value="HypA"/>
    <property type="match status" value="1"/>
</dbReference>
<dbReference type="PIRSF" id="PIRSF004761">
    <property type="entry name" value="Hydrgn_mat_HypA"/>
    <property type="match status" value="1"/>
</dbReference>
<reference key="1">
    <citation type="journal article" date="2004" name="Nat. Biotechnol.">
        <title>Complete genome sequence of the metabolically versatile photosynthetic bacterium Rhodopseudomonas palustris.</title>
        <authorList>
            <person name="Larimer F.W."/>
            <person name="Chain P."/>
            <person name="Hauser L."/>
            <person name="Lamerdin J.E."/>
            <person name="Malfatti S."/>
            <person name="Do L."/>
            <person name="Land M.L."/>
            <person name="Pelletier D.A."/>
            <person name="Beatty J.T."/>
            <person name="Lang A.S."/>
            <person name="Tabita F.R."/>
            <person name="Gibson J.L."/>
            <person name="Hanson T.E."/>
            <person name="Bobst C."/>
            <person name="Torres y Torres J.L."/>
            <person name="Peres C."/>
            <person name="Harrison F.H."/>
            <person name="Gibson J."/>
            <person name="Harwood C.S."/>
        </authorList>
    </citation>
    <scope>NUCLEOTIDE SEQUENCE [LARGE SCALE GENOMIC DNA]</scope>
    <source>
        <strain>ATCC BAA-98 / CGA009</strain>
    </source>
</reference>
<name>HYPA_RHOPA</name>
<evidence type="ECO:0000255" key="1">
    <source>
        <dbReference type="HAMAP-Rule" id="MF_00213"/>
    </source>
</evidence>
<keyword id="KW-0479">Metal-binding</keyword>
<keyword id="KW-0533">Nickel</keyword>
<keyword id="KW-0862">Zinc</keyword>
<protein>
    <recommendedName>
        <fullName evidence="1">Hydrogenase maturation factor HypA</fullName>
    </recommendedName>
</protein>
<sequence>MHEMALCESMIEIIEREAREQQFSRVRAVWLEIGALGHVDPEAMRFCFSAVAHGGIAADARLEILEMPGAAWCMDCAKTVTIAQRDAPCPDCGGHHLQITAGEELRIRELEVD</sequence>
<proteinExistence type="inferred from homology"/>